<gene>
    <name evidence="1" type="primary">tal</name>
    <name type="ordered locus">PHZ_c3333</name>
</gene>
<name>TAL_PHEZH</name>
<sequence length="217" mass="22801">MQLFLDTTDVAVLKDLAATGLVDGVTTNPSLIAKSGRNMLEVIAEICGIVEGPVSAEVAGTDVHTMLAEGRKLAGVAPNVVVKVPLTREGLIATSEFCAEGIQTNVTLCFSAAQALLAAKAGATYISPFIGRLDDHGAEGMDLISEIRAIYDNYDFDTEILAASIRTSAHVKEAALAGADCATIPPDVFQALFKHPLTEKGLQQFLADWAKTGQSIL</sequence>
<comment type="function">
    <text evidence="1">Transaldolase is important for the balance of metabolites in the pentose-phosphate pathway.</text>
</comment>
<comment type="catalytic activity">
    <reaction evidence="1">
        <text>D-sedoheptulose 7-phosphate + D-glyceraldehyde 3-phosphate = D-erythrose 4-phosphate + beta-D-fructose 6-phosphate</text>
        <dbReference type="Rhea" id="RHEA:17053"/>
        <dbReference type="ChEBI" id="CHEBI:16897"/>
        <dbReference type="ChEBI" id="CHEBI:57483"/>
        <dbReference type="ChEBI" id="CHEBI:57634"/>
        <dbReference type="ChEBI" id="CHEBI:59776"/>
        <dbReference type="EC" id="2.2.1.2"/>
    </reaction>
</comment>
<comment type="pathway">
    <text evidence="1">Carbohydrate degradation; pentose phosphate pathway; D-glyceraldehyde 3-phosphate and beta-D-fructose 6-phosphate from D-ribose 5-phosphate and D-xylulose 5-phosphate (non-oxidative stage): step 2/3.</text>
</comment>
<comment type="subcellular location">
    <subcellularLocation>
        <location evidence="1">Cytoplasm</location>
    </subcellularLocation>
</comment>
<comment type="similarity">
    <text evidence="1">Belongs to the transaldolase family. Type 3B subfamily.</text>
</comment>
<protein>
    <recommendedName>
        <fullName evidence="1">Probable transaldolase</fullName>
        <ecNumber evidence="1">2.2.1.2</ecNumber>
    </recommendedName>
</protein>
<reference key="1">
    <citation type="journal article" date="2008" name="BMC Genomics">
        <title>Complete genome of Phenylobacterium zucineum - a novel facultative intracellular bacterium isolated from human erythroleukemia cell line K562.</title>
        <authorList>
            <person name="Luo Y."/>
            <person name="Xu X."/>
            <person name="Ding Z."/>
            <person name="Liu Z."/>
            <person name="Zhang B."/>
            <person name="Yan Z."/>
            <person name="Sun J."/>
            <person name="Hu S."/>
            <person name="Hu X."/>
        </authorList>
    </citation>
    <scope>NUCLEOTIDE SEQUENCE [LARGE SCALE GENOMIC DNA]</scope>
    <source>
        <strain>HLK1</strain>
    </source>
</reference>
<dbReference type="EC" id="2.2.1.2" evidence="1"/>
<dbReference type="EMBL" id="CP000747">
    <property type="protein sequence ID" value="ACG79742.1"/>
    <property type="molecule type" value="Genomic_DNA"/>
</dbReference>
<dbReference type="RefSeq" id="WP_012523880.1">
    <property type="nucleotide sequence ID" value="NC_011144.1"/>
</dbReference>
<dbReference type="SMR" id="B4RB97"/>
<dbReference type="STRING" id="450851.PHZ_c3333"/>
<dbReference type="KEGG" id="pzu:PHZ_c3333"/>
<dbReference type="eggNOG" id="COG0176">
    <property type="taxonomic scope" value="Bacteria"/>
</dbReference>
<dbReference type="HOGENOM" id="CLU_079764_0_0_5"/>
<dbReference type="OrthoDB" id="9807051at2"/>
<dbReference type="UniPathway" id="UPA00115">
    <property type="reaction ID" value="UER00414"/>
</dbReference>
<dbReference type="Proteomes" id="UP000001868">
    <property type="component" value="Chromosome"/>
</dbReference>
<dbReference type="GO" id="GO:0005737">
    <property type="term" value="C:cytoplasm"/>
    <property type="evidence" value="ECO:0007669"/>
    <property type="project" value="UniProtKB-SubCell"/>
</dbReference>
<dbReference type="GO" id="GO:0016832">
    <property type="term" value="F:aldehyde-lyase activity"/>
    <property type="evidence" value="ECO:0007669"/>
    <property type="project" value="InterPro"/>
</dbReference>
<dbReference type="GO" id="GO:0004801">
    <property type="term" value="F:transaldolase activity"/>
    <property type="evidence" value="ECO:0007669"/>
    <property type="project" value="UniProtKB-UniRule"/>
</dbReference>
<dbReference type="GO" id="GO:0005975">
    <property type="term" value="P:carbohydrate metabolic process"/>
    <property type="evidence" value="ECO:0007669"/>
    <property type="project" value="InterPro"/>
</dbReference>
<dbReference type="GO" id="GO:0006098">
    <property type="term" value="P:pentose-phosphate shunt"/>
    <property type="evidence" value="ECO:0007669"/>
    <property type="project" value="UniProtKB-UniRule"/>
</dbReference>
<dbReference type="CDD" id="cd00956">
    <property type="entry name" value="Transaldolase_FSA"/>
    <property type="match status" value="1"/>
</dbReference>
<dbReference type="FunFam" id="3.20.20.70:FF:000018">
    <property type="entry name" value="Probable transaldolase"/>
    <property type="match status" value="1"/>
</dbReference>
<dbReference type="Gene3D" id="3.20.20.70">
    <property type="entry name" value="Aldolase class I"/>
    <property type="match status" value="1"/>
</dbReference>
<dbReference type="HAMAP" id="MF_00494">
    <property type="entry name" value="Transaldolase_3b"/>
    <property type="match status" value="1"/>
</dbReference>
<dbReference type="InterPro" id="IPR013785">
    <property type="entry name" value="Aldolase_TIM"/>
</dbReference>
<dbReference type="InterPro" id="IPR001585">
    <property type="entry name" value="TAL/FSA"/>
</dbReference>
<dbReference type="InterPro" id="IPR022999">
    <property type="entry name" value="Transaldolase_3B"/>
</dbReference>
<dbReference type="InterPro" id="IPR004731">
    <property type="entry name" value="Transaldolase_3B/F6P_aldolase"/>
</dbReference>
<dbReference type="InterPro" id="IPR018225">
    <property type="entry name" value="Transaldolase_AS"/>
</dbReference>
<dbReference type="InterPro" id="IPR033919">
    <property type="entry name" value="TSA/FSA_arc/bac"/>
</dbReference>
<dbReference type="NCBIfam" id="TIGR00875">
    <property type="entry name" value="fsa_talC_mipB"/>
    <property type="match status" value="1"/>
</dbReference>
<dbReference type="PANTHER" id="PTHR10683:SF40">
    <property type="entry name" value="FRUCTOSE-6-PHOSPHATE ALDOLASE 1-RELATED"/>
    <property type="match status" value="1"/>
</dbReference>
<dbReference type="PANTHER" id="PTHR10683">
    <property type="entry name" value="TRANSALDOLASE"/>
    <property type="match status" value="1"/>
</dbReference>
<dbReference type="Pfam" id="PF00923">
    <property type="entry name" value="TAL_FSA"/>
    <property type="match status" value="1"/>
</dbReference>
<dbReference type="SUPFAM" id="SSF51569">
    <property type="entry name" value="Aldolase"/>
    <property type="match status" value="1"/>
</dbReference>
<dbReference type="PROSITE" id="PS01054">
    <property type="entry name" value="TRANSALDOLASE_1"/>
    <property type="match status" value="1"/>
</dbReference>
<dbReference type="PROSITE" id="PS00958">
    <property type="entry name" value="TRANSALDOLASE_2"/>
    <property type="match status" value="1"/>
</dbReference>
<evidence type="ECO:0000255" key="1">
    <source>
        <dbReference type="HAMAP-Rule" id="MF_00494"/>
    </source>
</evidence>
<accession>B4RB97</accession>
<feature type="chain" id="PRO_1000126343" description="Probable transaldolase">
    <location>
        <begin position="1"/>
        <end position="217"/>
    </location>
</feature>
<feature type="active site" description="Schiff-base intermediate with substrate" evidence="1">
    <location>
        <position position="83"/>
    </location>
</feature>
<keyword id="KW-0963">Cytoplasm</keyword>
<keyword id="KW-0570">Pentose shunt</keyword>
<keyword id="KW-1185">Reference proteome</keyword>
<keyword id="KW-0704">Schiff base</keyword>
<keyword id="KW-0808">Transferase</keyword>
<organism>
    <name type="scientific">Phenylobacterium zucineum (strain HLK1)</name>
    <dbReference type="NCBI Taxonomy" id="450851"/>
    <lineage>
        <taxon>Bacteria</taxon>
        <taxon>Pseudomonadati</taxon>
        <taxon>Pseudomonadota</taxon>
        <taxon>Alphaproteobacteria</taxon>
        <taxon>Caulobacterales</taxon>
        <taxon>Caulobacteraceae</taxon>
        <taxon>Phenylobacterium</taxon>
    </lineage>
</organism>
<proteinExistence type="inferred from homology"/>